<gene>
    <name type="primary">CCR4-3</name>
    <name type="ordered locus">At3g18500</name>
    <name type="ORF">MYF24.23</name>
</gene>
<dbReference type="EC" id="3.1.13.4"/>
<dbReference type="EMBL" id="AB026658">
    <property type="protein sequence ID" value="BAB01117.1"/>
    <property type="status" value="ALT_SEQ"/>
    <property type="molecule type" value="Genomic_DNA"/>
</dbReference>
<dbReference type="EMBL" id="CP002686">
    <property type="protein sequence ID" value="AEE76105.1"/>
    <property type="molecule type" value="Genomic_DNA"/>
</dbReference>
<dbReference type="EMBL" id="CP002686">
    <property type="protein sequence ID" value="AEE76106.1"/>
    <property type="molecule type" value="Genomic_DNA"/>
</dbReference>
<dbReference type="EMBL" id="AY093122">
    <property type="protein sequence ID" value="AAM13121.1"/>
    <property type="molecule type" value="mRNA"/>
</dbReference>
<dbReference type="EMBL" id="BT003387">
    <property type="protein sequence ID" value="AAO30050.1"/>
    <property type="molecule type" value="mRNA"/>
</dbReference>
<dbReference type="EMBL" id="BX822235">
    <property type="status" value="NOT_ANNOTATED_CDS"/>
    <property type="molecule type" value="mRNA"/>
</dbReference>
<dbReference type="EMBL" id="BX823421">
    <property type="status" value="NOT_ANNOTATED_CDS"/>
    <property type="molecule type" value="mRNA"/>
</dbReference>
<dbReference type="RefSeq" id="NP_001078178.1">
    <molecule id="Q9LS39-1"/>
    <property type="nucleotide sequence ID" value="NM_001084709.1"/>
</dbReference>
<dbReference type="RefSeq" id="NP_001326135.1">
    <property type="nucleotide sequence ID" value="NM_001338338.1"/>
</dbReference>
<dbReference type="RefSeq" id="NP_188479.3">
    <molecule id="Q9LS39-2"/>
    <property type="nucleotide sequence ID" value="NM_112735.4"/>
</dbReference>
<dbReference type="SMR" id="Q9LS39"/>
<dbReference type="FunCoup" id="Q9LS39">
    <property type="interactions" value="3231"/>
</dbReference>
<dbReference type="STRING" id="3702.Q9LS39"/>
<dbReference type="PaxDb" id="3702-AT3G18500.3"/>
<dbReference type="EnsemblPlants" id="AT3G18500.1">
    <molecule id="Q9LS39-2"/>
    <property type="protein sequence ID" value="AT3G18500.1"/>
    <property type="gene ID" value="AT3G18500"/>
</dbReference>
<dbReference type="EnsemblPlants" id="AT3G18500.2">
    <molecule id="Q9LS39-1"/>
    <property type="protein sequence ID" value="AT3G18500.2"/>
    <property type="gene ID" value="AT3G18500"/>
</dbReference>
<dbReference type="GeneID" id="821380"/>
<dbReference type="Gramene" id="AT3G18500.1">
    <molecule id="Q9LS39-2"/>
    <property type="protein sequence ID" value="AT3G18500.1"/>
    <property type="gene ID" value="AT3G18500"/>
</dbReference>
<dbReference type="Gramene" id="AT3G18500.2">
    <molecule id="Q9LS39-1"/>
    <property type="protein sequence ID" value="AT3G18500.2"/>
    <property type="gene ID" value="AT3G18500"/>
</dbReference>
<dbReference type="KEGG" id="ath:AT3G18500"/>
<dbReference type="Araport" id="AT3G18500"/>
<dbReference type="TAIR" id="AT3G18500">
    <property type="gene designation" value="CCR4C"/>
</dbReference>
<dbReference type="eggNOG" id="KOG2338">
    <property type="taxonomic scope" value="Eukaryota"/>
</dbReference>
<dbReference type="HOGENOM" id="CLU_016428_0_0_1"/>
<dbReference type="InParanoid" id="Q9LS39"/>
<dbReference type="PhylomeDB" id="Q9LS39"/>
<dbReference type="PRO" id="PR:Q9LS39"/>
<dbReference type="Proteomes" id="UP000006548">
    <property type="component" value="Chromosome 3"/>
</dbReference>
<dbReference type="ExpressionAtlas" id="Q9LS39">
    <property type="expression patterns" value="baseline and differential"/>
</dbReference>
<dbReference type="GO" id="GO:0005737">
    <property type="term" value="C:cytoplasm"/>
    <property type="evidence" value="ECO:0007669"/>
    <property type="project" value="UniProtKB-SubCell"/>
</dbReference>
<dbReference type="GO" id="GO:0005634">
    <property type="term" value="C:nucleus"/>
    <property type="evidence" value="ECO:0007669"/>
    <property type="project" value="UniProtKB-SubCell"/>
</dbReference>
<dbReference type="GO" id="GO:0046872">
    <property type="term" value="F:metal ion binding"/>
    <property type="evidence" value="ECO:0007669"/>
    <property type="project" value="UniProtKB-KW"/>
</dbReference>
<dbReference type="GO" id="GO:0004535">
    <property type="term" value="F:poly(A)-specific ribonuclease activity"/>
    <property type="evidence" value="ECO:0007669"/>
    <property type="project" value="UniProtKB-EC"/>
</dbReference>
<dbReference type="GO" id="GO:0003723">
    <property type="term" value="F:RNA binding"/>
    <property type="evidence" value="ECO:0007669"/>
    <property type="project" value="UniProtKB-KW"/>
</dbReference>
<dbReference type="FunFam" id="3.60.10.10:FF:000080">
    <property type="entry name" value="Carbon catabolite repressor protein 4 homolog 3"/>
    <property type="match status" value="1"/>
</dbReference>
<dbReference type="Gene3D" id="3.60.10.10">
    <property type="entry name" value="Endonuclease/exonuclease/phosphatase"/>
    <property type="match status" value="1"/>
</dbReference>
<dbReference type="InterPro" id="IPR050410">
    <property type="entry name" value="CCR4/nocturin_mRNA_transcr"/>
</dbReference>
<dbReference type="InterPro" id="IPR036691">
    <property type="entry name" value="Endo/exonu/phosph_ase_sf"/>
</dbReference>
<dbReference type="InterPro" id="IPR005135">
    <property type="entry name" value="Endo/exonuclease/phosphatase"/>
</dbReference>
<dbReference type="PANTHER" id="PTHR12121">
    <property type="entry name" value="CARBON CATABOLITE REPRESSOR PROTEIN 4"/>
    <property type="match status" value="1"/>
</dbReference>
<dbReference type="PANTHER" id="PTHR12121:SF82">
    <property type="entry name" value="CARBON CATABOLITE REPRESSOR PROTEIN 4 HOMOLOG 3"/>
    <property type="match status" value="1"/>
</dbReference>
<dbReference type="Pfam" id="PF03372">
    <property type="entry name" value="Exo_endo_phos"/>
    <property type="match status" value="1"/>
</dbReference>
<dbReference type="SUPFAM" id="SSF56219">
    <property type="entry name" value="DNase I-like"/>
    <property type="match status" value="1"/>
</dbReference>
<sequence length="448" mass="50322">MRCVNRVDCSWSRPSEAYRILPSGGHLSSGFHQCPLSSLSFRSSFVCCSSSTSGPSDSNPESSSNRSYSRRWQNPLPRRQHPDQIPSSQIARDWIDSDTTPVSQALERFTVVSYNILGDGNSSYHRELYSNVSVPYLKWGYRKRLICEELIRLNPDIISMQEVDKYFDLFSMMEKAGYAGSYKRRTGDNVDGCAMFWKADRFGVLERENIEFSQFGMRDNVAQLAVLELRKSNKSRKILLGNIHVLYNPNQGDVKLGQVRSLCSKAHLLSKKWGDIPIVLCGDFNSTPKSPLYNFLASSELNVMEHDKKELSGQKNCRPTKVLETGSKSSNTITFSFCSSWTKEEIRVATGQENSYWAAHPLKLNSSYASVKGSANTRDSVGEPLATSYHSKFLGTVDYLWYSDGLLPARVLDTLPIDVLCKTKGLPCQELGSDHLALVSEFVFEPDG</sequence>
<protein>
    <recommendedName>
        <fullName>Carbon catabolite repressor protein 4 homolog 3</fullName>
        <shortName>CCR4 homolog 3</shortName>
        <ecNumber>3.1.13.4</ecNumber>
    </recommendedName>
</protein>
<reference key="1">
    <citation type="journal article" date="2000" name="DNA Res.">
        <title>Structural analysis of Arabidopsis thaliana chromosome 3. I. Sequence features of the regions of 4,504,864 bp covered by sixty P1 and TAC clones.</title>
        <authorList>
            <person name="Sato S."/>
            <person name="Nakamura Y."/>
            <person name="Kaneko T."/>
            <person name="Katoh T."/>
            <person name="Asamizu E."/>
            <person name="Tabata S."/>
        </authorList>
    </citation>
    <scope>NUCLEOTIDE SEQUENCE [LARGE SCALE GENOMIC DNA]</scope>
    <source>
        <strain>cv. Columbia</strain>
    </source>
</reference>
<reference key="2">
    <citation type="journal article" date="2017" name="Plant J.">
        <title>Araport11: a complete reannotation of the Arabidopsis thaliana reference genome.</title>
        <authorList>
            <person name="Cheng C.Y."/>
            <person name="Krishnakumar V."/>
            <person name="Chan A.P."/>
            <person name="Thibaud-Nissen F."/>
            <person name="Schobel S."/>
            <person name="Town C.D."/>
        </authorList>
    </citation>
    <scope>GENOME REANNOTATION</scope>
    <source>
        <strain>cv. Columbia</strain>
    </source>
</reference>
<reference key="3">
    <citation type="journal article" date="2003" name="Science">
        <title>Empirical analysis of transcriptional activity in the Arabidopsis genome.</title>
        <authorList>
            <person name="Yamada K."/>
            <person name="Lim J."/>
            <person name="Dale J.M."/>
            <person name="Chen H."/>
            <person name="Shinn P."/>
            <person name="Palm C.J."/>
            <person name="Southwick A.M."/>
            <person name="Wu H.C."/>
            <person name="Kim C.J."/>
            <person name="Nguyen M."/>
            <person name="Pham P.K."/>
            <person name="Cheuk R.F."/>
            <person name="Karlin-Newmann G."/>
            <person name="Liu S.X."/>
            <person name="Lam B."/>
            <person name="Sakano H."/>
            <person name="Wu T."/>
            <person name="Yu G."/>
            <person name="Miranda M."/>
            <person name="Quach H.L."/>
            <person name="Tripp M."/>
            <person name="Chang C.H."/>
            <person name="Lee J.M."/>
            <person name="Toriumi M.J."/>
            <person name="Chan M.M."/>
            <person name="Tang C.C."/>
            <person name="Onodera C.S."/>
            <person name="Deng J.M."/>
            <person name="Akiyama K."/>
            <person name="Ansari Y."/>
            <person name="Arakawa T."/>
            <person name="Banh J."/>
            <person name="Banno F."/>
            <person name="Bowser L."/>
            <person name="Brooks S.Y."/>
            <person name="Carninci P."/>
            <person name="Chao Q."/>
            <person name="Choy N."/>
            <person name="Enju A."/>
            <person name="Goldsmith A.D."/>
            <person name="Gurjal M."/>
            <person name="Hansen N.F."/>
            <person name="Hayashizaki Y."/>
            <person name="Johnson-Hopson C."/>
            <person name="Hsuan V.W."/>
            <person name="Iida K."/>
            <person name="Karnes M."/>
            <person name="Khan S."/>
            <person name="Koesema E."/>
            <person name="Ishida J."/>
            <person name="Jiang P.X."/>
            <person name="Jones T."/>
            <person name="Kawai J."/>
            <person name="Kamiya A."/>
            <person name="Meyers C."/>
            <person name="Nakajima M."/>
            <person name="Narusaka M."/>
            <person name="Seki M."/>
            <person name="Sakurai T."/>
            <person name="Satou M."/>
            <person name="Tamse R."/>
            <person name="Vaysberg M."/>
            <person name="Wallender E.K."/>
            <person name="Wong C."/>
            <person name="Yamamura Y."/>
            <person name="Yuan S."/>
            <person name="Shinozaki K."/>
            <person name="Davis R.W."/>
            <person name="Theologis A."/>
            <person name="Ecker J.R."/>
        </authorList>
    </citation>
    <scope>NUCLEOTIDE SEQUENCE [LARGE SCALE MRNA] (ISOFORM 4)</scope>
    <source>
        <strain>cv. Columbia</strain>
    </source>
</reference>
<reference key="4">
    <citation type="journal article" date="2004" name="Genome Res.">
        <title>Whole genome sequence comparisons and 'full-length' cDNA sequences: a combined approach to evaluate and improve Arabidopsis genome annotation.</title>
        <authorList>
            <person name="Castelli V."/>
            <person name="Aury J.-M."/>
            <person name="Jaillon O."/>
            <person name="Wincker P."/>
            <person name="Clepet C."/>
            <person name="Menard M."/>
            <person name="Cruaud C."/>
            <person name="Quetier F."/>
            <person name="Scarpelli C."/>
            <person name="Schaechter V."/>
            <person name="Temple G."/>
            <person name="Caboche M."/>
            <person name="Weissenbach J."/>
            <person name="Salanoubat M."/>
        </authorList>
    </citation>
    <scope>NUCLEOTIDE SEQUENCE [LARGE SCALE MRNA] (ISOFORMS 2 AND 3)</scope>
    <source>
        <strain>cv. Columbia</strain>
    </source>
</reference>
<evidence type="ECO:0000250" key="1"/>
<evidence type="ECO:0000250" key="2">
    <source>
        <dbReference type="UniProtKB" id="O95551"/>
    </source>
</evidence>
<evidence type="ECO:0000256" key="3">
    <source>
        <dbReference type="SAM" id="MobiDB-lite"/>
    </source>
</evidence>
<evidence type="ECO:0000303" key="4">
    <source>
    </source>
</evidence>
<evidence type="ECO:0000303" key="5">
    <source>
    </source>
</evidence>
<evidence type="ECO:0000305" key="6"/>
<proteinExistence type="evidence at transcript level"/>
<organism>
    <name type="scientific">Arabidopsis thaliana</name>
    <name type="common">Mouse-ear cress</name>
    <dbReference type="NCBI Taxonomy" id="3702"/>
    <lineage>
        <taxon>Eukaryota</taxon>
        <taxon>Viridiplantae</taxon>
        <taxon>Streptophyta</taxon>
        <taxon>Embryophyta</taxon>
        <taxon>Tracheophyta</taxon>
        <taxon>Spermatophyta</taxon>
        <taxon>Magnoliopsida</taxon>
        <taxon>eudicotyledons</taxon>
        <taxon>Gunneridae</taxon>
        <taxon>Pentapetalae</taxon>
        <taxon>rosids</taxon>
        <taxon>malvids</taxon>
        <taxon>Brassicales</taxon>
        <taxon>Brassicaceae</taxon>
        <taxon>Camelineae</taxon>
        <taxon>Arabidopsis</taxon>
    </lineage>
</organism>
<comment type="function">
    <text evidence="1">Acts as a catalytic component of the CCR4-NOT core complex, which in the nucleus seems to be a general transcription factor, and in the cytoplasm the major mRNA deadenylase involved in mRNA turnover.</text>
</comment>
<comment type="catalytic activity">
    <reaction>
        <text>Exonucleolytic cleavage of poly(A) to 5'-AMP.</text>
        <dbReference type="EC" id="3.1.13.4"/>
    </reaction>
</comment>
<comment type="cofactor">
    <cofactor evidence="1">
        <name>Mg(2+)</name>
        <dbReference type="ChEBI" id="CHEBI:18420"/>
    </cofactor>
</comment>
<comment type="subunit">
    <text evidence="1">Component of the CCR4-NOT complex, at least composed of CRR4 and CAF1 proteins.</text>
</comment>
<comment type="subcellular location">
    <subcellularLocation>
        <location evidence="1">Nucleus</location>
    </subcellularLocation>
    <subcellularLocation>
        <location evidence="1">Cytoplasm</location>
    </subcellularLocation>
</comment>
<comment type="alternative products">
    <event type="alternative splicing"/>
    <isoform>
        <id>Q9LS39-1</id>
        <name>1</name>
        <sequence type="displayed"/>
    </isoform>
    <isoform>
        <id>Q9LS39-2</id>
        <name>2</name>
        <sequence type="described" ref="VSP_035824"/>
    </isoform>
    <isoform>
        <id>Q9LS39-3</id>
        <name>3</name>
        <sequence type="described" ref="VSP_035825 VSP_035826"/>
    </isoform>
    <isoform>
        <id>Q9LS39-4</id>
        <name>4</name>
        <sequence type="described" ref="VSP_035823 VSP_035825 VSP_035826"/>
    </isoform>
</comment>
<comment type="similarity">
    <text evidence="6">Belongs to the CCR4/nocturin family.</text>
</comment>
<comment type="sequence caution" evidence="6">
    <conflict type="erroneous gene model prediction">
        <sequence resource="EMBL-CDS" id="BAB01117"/>
    </conflict>
</comment>
<comment type="sequence caution" evidence="6">
    <conflict type="miscellaneous discrepancy">
        <sequence resource="EMBL" id="BX822235"/>
    </conflict>
    <text>Sequencing errors.</text>
</comment>
<comment type="sequence caution" evidence="6">
    <conflict type="miscellaneous discrepancy">
        <sequence resource="EMBL" id="BX823421"/>
    </conflict>
    <text>Sequencing errors.</text>
</comment>
<feature type="chain" id="PRO_0000355046" description="Carbon catabolite repressor protein 4 homolog 3">
    <location>
        <begin position="1"/>
        <end position="448"/>
    </location>
</feature>
<feature type="region of interest" description="Disordered" evidence="3">
    <location>
        <begin position="50"/>
        <end position="92"/>
    </location>
</feature>
<feature type="compositionally biased region" description="Low complexity" evidence="3">
    <location>
        <begin position="50"/>
        <end position="67"/>
    </location>
</feature>
<feature type="binding site" evidence="2">
    <location>
        <position position="162"/>
    </location>
    <ligand>
        <name>Mg(2+)</name>
        <dbReference type="ChEBI" id="CHEBI:18420"/>
    </ligand>
</feature>
<feature type="splice variant" id="VSP_035823" description="In isoform 4." evidence="4">
    <location>
        <begin position="105"/>
        <end position="106"/>
    </location>
</feature>
<feature type="splice variant" id="VSP_035824" description="In isoform 2." evidence="5">
    <location>
        <begin position="162"/>
        <end position="183"/>
    </location>
</feature>
<feature type="splice variant" id="VSP_035825" description="In isoform 3 and isoform 4." evidence="4 5">
    <original>RRTGDNVDGCAMFWKADRFGVLERENIEFSQFGMRDNVAQLAVLELRKSNKSRKILLGNIHVLYNPNQGDVKLGQVRSLCS</original>
    <variation>KDYKYKLCNGSGELEITSMVAQCFGRLTGLEFWRGKTLSLASLVCGIMLHSLLFLSSGSLISQERYCWVTFTCFIIQIKEM</variation>
    <location>
        <begin position="184"/>
        <end position="264"/>
    </location>
</feature>
<feature type="splice variant" id="VSP_035826" description="In isoform 3 and isoform 4." evidence="4 5">
    <location>
        <begin position="265"/>
        <end position="448"/>
    </location>
</feature>
<accession>Q9LS39</accession>
<accession>A8MSA8</accession>
<accession>Q8RWF7</accession>
<keyword id="KW-0025">Alternative splicing</keyword>
<keyword id="KW-0963">Cytoplasm</keyword>
<keyword id="KW-0269">Exonuclease</keyword>
<keyword id="KW-0378">Hydrolase</keyword>
<keyword id="KW-0460">Magnesium</keyword>
<keyword id="KW-0479">Metal-binding</keyword>
<keyword id="KW-0540">Nuclease</keyword>
<keyword id="KW-0539">Nucleus</keyword>
<keyword id="KW-1185">Reference proteome</keyword>
<keyword id="KW-0677">Repeat</keyword>
<keyword id="KW-0694">RNA-binding</keyword>
<keyword id="KW-0804">Transcription</keyword>
<keyword id="KW-0805">Transcription regulation</keyword>
<name>CCR4C_ARATH</name>